<proteinExistence type="evidence at protein level"/>
<evidence type="ECO:0000250" key="1"/>
<evidence type="ECO:0000269" key="2">
    <source>
    </source>
</evidence>
<evidence type="ECO:0000305" key="3"/>
<evidence type="ECO:0000305" key="4">
    <source>
    </source>
</evidence>
<accession>P18869</accession>
<accession>Q76PD7</accession>
<name>LEU3_SCHPO</name>
<reference key="1">
    <citation type="journal article" date="1988" name="Curr. Genet.">
        <title>The primary structure of the leu1+ gene of Schizosaccharomyces pombe.</title>
        <authorList>
            <person name="Kikuchi Y."/>
            <person name="Kitazawa Y."/>
            <person name="Shimatake G."/>
            <person name="Yamamoto M."/>
        </authorList>
    </citation>
    <scope>NUCLEOTIDE SEQUENCE [GENOMIC DNA]</scope>
    <scope>FUNCTION</scope>
    <scope>CATALYTIC ACTIVITY</scope>
    <scope>PATHWAY</scope>
</reference>
<reference key="2">
    <citation type="journal article" date="2002" name="Nature">
        <title>The genome sequence of Schizosaccharomyces pombe.</title>
        <authorList>
            <person name="Wood V."/>
            <person name="Gwilliam R."/>
            <person name="Rajandream M.A."/>
            <person name="Lyne M.H."/>
            <person name="Lyne R."/>
            <person name="Stewart A."/>
            <person name="Sgouros J.G."/>
            <person name="Peat N."/>
            <person name="Hayles J."/>
            <person name="Baker S.G."/>
            <person name="Basham D."/>
            <person name="Bowman S."/>
            <person name="Brooks K."/>
            <person name="Brown D."/>
            <person name="Brown S."/>
            <person name="Chillingworth T."/>
            <person name="Churcher C.M."/>
            <person name="Collins M."/>
            <person name="Connor R."/>
            <person name="Cronin A."/>
            <person name="Davis P."/>
            <person name="Feltwell T."/>
            <person name="Fraser A."/>
            <person name="Gentles S."/>
            <person name="Goble A."/>
            <person name="Hamlin N."/>
            <person name="Harris D.E."/>
            <person name="Hidalgo J."/>
            <person name="Hodgson G."/>
            <person name="Holroyd S."/>
            <person name="Hornsby T."/>
            <person name="Howarth S."/>
            <person name="Huckle E.J."/>
            <person name="Hunt S."/>
            <person name="Jagels K."/>
            <person name="James K.D."/>
            <person name="Jones L."/>
            <person name="Jones M."/>
            <person name="Leather S."/>
            <person name="McDonald S."/>
            <person name="McLean J."/>
            <person name="Mooney P."/>
            <person name="Moule S."/>
            <person name="Mungall K.L."/>
            <person name="Murphy L.D."/>
            <person name="Niblett D."/>
            <person name="Odell C."/>
            <person name="Oliver K."/>
            <person name="O'Neil S."/>
            <person name="Pearson D."/>
            <person name="Quail M.A."/>
            <person name="Rabbinowitsch E."/>
            <person name="Rutherford K.M."/>
            <person name="Rutter S."/>
            <person name="Saunders D."/>
            <person name="Seeger K."/>
            <person name="Sharp S."/>
            <person name="Skelton J."/>
            <person name="Simmonds M.N."/>
            <person name="Squares R."/>
            <person name="Squares S."/>
            <person name="Stevens K."/>
            <person name="Taylor K."/>
            <person name="Taylor R.G."/>
            <person name="Tivey A."/>
            <person name="Walsh S.V."/>
            <person name="Warren T."/>
            <person name="Whitehead S."/>
            <person name="Woodward J.R."/>
            <person name="Volckaert G."/>
            <person name="Aert R."/>
            <person name="Robben J."/>
            <person name="Grymonprez B."/>
            <person name="Weltjens I."/>
            <person name="Vanstreels E."/>
            <person name="Rieger M."/>
            <person name="Schaefer M."/>
            <person name="Mueller-Auer S."/>
            <person name="Gabel C."/>
            <person name="Fuchs M."/>
            <person name="Duesterhoeft A."/>
            <person name="Fritzc C."/>
            <person name="Holzer E."/>
            <person name="Moestl D."/>
            <person name="Hilbert H."/>
            <person name="Borzym K."/>
            <person name="Langer I."/>
            <person name="Beck A."/>
            <person name="Lehrach H."/>
            <person name="Reinhardt R."/>
            <person name="Pohl T.M."/>
            <person name="Eger P."/>
            <person name="Zimmermann W."/>
            <person name="Wedler H."/>
            <person name="Wambutt R."/>
            <person name="Purnelle B."/>
            <person name="Goffeau A."/>
            <person name="Cadieu E."/>
            <person name="Dreano S."/>
            <person name="Gloux S."/>
            <person name="Lelaure V."/>
            <person name="Mottier S."/>
            <person name="Galibert F."/>
            <person name="Aves S.J."/>
            <person name="Xiang Z."/>
            <person name="Hunt C."/>
            <person name="Moore K."/>
            <person name="Hurst S.M."/>
            <person name="Lucas M."/>
            <person name="Rochet M."/>
            <person name="Gaillardin C."/>
            <person name="Tallada V.A."/>
            <person name="Garzon A."/>
            <person name="Thode G."/>
            <person name="Daga R.R."/>
            <person name="Cruzado L."/>
            <person name="Jimenez J."/>
            <person name="Sanchez M."/>
            <person name="del Rey F."/>
            <person name="Benito J."/>
            <person name="Dominguez A."/>
            <person name="Revuelta J.L."/>
            <person name="Moreno S."/>
            <person name="Armstrong J."/>
            <person name="Forsburg S.L."/>
            <person name="Cerutti L."/>
            <person name="Lowe T."/>
            <person name="McCombie W.R."/>
            <person name="Paulsen I."/>
            <person name="Potashkin J."/>
            <person name="Shpakovski G.V."/>
            <person name="Ussery D."/>
            <person name="Barrell B.G."/>
            <person name="Nurse P."/>
        </authorList>
    </citation>
    <scope>NUCLEOTIDE SEQUENCE [LARGE SCALE GENOMIC DNA]</scope>
    <source>
        <strain>972 / ATCC 24843</strain>
    </source>
</reference>
<reference key="3">
    <citation type="journal article" date="2008" name="J. Proteome Res.">
        <title>Phosphoproteome analysis of fission yeast.</title>
        <authorList>
            <person name="Wilson-Grady J.T."/>
            <person name="Villen J."/>
            <person name="Gygi S.P."/>
        </authorList>
    </citation>
    <scope>PHOSPHORYLATION [LARGE SCALE ANALYSIS] AT THR-55</scope>
    <scope>IDENTIFICATION BY MASS SPECTROMETRY</scope>
</reference>
<organism>
    <name type="scientific">Schizosaccharomyces pombe (strain 972 / ATCC 24843)</name>
    <name type="common">Fission yeast</name>
    <dbReference type="NCBI Taxonomy" id="284812"/>
    <lineage>
        <taxon>Eukaryota</taxon>
        <taxon>Fungi</taxon>
        <taxon>Dikarya</taxon>
        <taxon>Ascomycota</taxon>
        <taxon>Taphrinomycotina</taxon>
        <taxon>Schizosaccharomycetes</taxon>
        <taxon>Schizosaccharomycetales</taxon>
        <taxon>Schizosaccharomycetaceae</taxon>
        <taxon>Schizosaccharomyces</taxon>
    </lineage>
</organism>
<dbReference type="EC" id="1.1.1.85" evidence="4"/>
<dbReference type="EMBL" id="M36910">
    <property type="protein sequence ID" value="AAA35316.1"/>
    <property type="molecule type" value="Genomic_DNA"/>
</dbReference>
<dbReference type="EMBL" id="CU329671">
    <property type="protein sequence ID" value="CAA16840.2"/>
    <property type="molecule type" value="Genomic_DNA"/>
</dbReference>
<dbReference type="PIR" id="T43407">
    <property type="entry name" value="T43407"/>
</dbReference>
<dbReference type="RefSeq" id="NP_595804.2">
    <property type="nucleotide sequence ID" value="NM_001021706.3"/>
</dbReference>
<dbReference type="SMR" id="P18869"/>
<dbReference type="BioGRID" id="276814">
    <property type="interactions" value="39"/>
</dbReference>
<dbReference type="FunCoup" id="P18869">
    <property type="interactions" value="322"/>
</dbReference>
<dbReference type="STRING" id="284812.P18869"/>
<dbReference type="iPTMnet" id="P18869"/>
<dbReference type="PaxDb" id="4896-SPBC1A4.02c.1"/>
<dbReference type="EnsemblFungi" id="SPBC1A4.02c.1">
    <property type="protein sequence ID" value="SPBC1A4.02c.1:pep"/>
    <property type="gene ID" value="SPBC1A4.02c"/>
</dbReference>
<dbReference type="GeneID" id="2540283"/>
<dbReference type="KEGG" id="spo:2540283"/>
<dbReference type="PomBase" id="SPBC1A4.02c">
    <property type="gene designation" value="leu1"/>
</dbReference>
<dbReference type="VEuPathDB" id="FungiDB:SPBC1A4.02c"/>
<dbReference type="eggNOG" id="KOG0786">
    <property type="taxonomic scope" value="Eukaryota"/>
</dbReference>
<dbReference type="HOGENOM" id="CLU_031953_0_3_1"/>
<dbReference type="InParanoid" id="P18869"/>
<dbReference type="OMA" id="EYDLGAR"/>
<dbReference type="PhylomeDB" id="P18869"/>
<dbReference type="UniPathway" id="UPA00048">
    <property type="reaction ID" value="UER00072"/>
</dbReference>
<dbReference type="PRO" id="PR:P18869"/>
<dbReference type="Proteomes" id="UP000002485">
    <property type="component" value="Chromosome II"/>
</dbReference>
<dbReference type="GO" id="GO:0005829">
    <property type="term" value="C:cytosol"/>
    <property type="evidence" value="ECO:0000316"/>
    <property type="project" value="PomBase"/>
</dbReference>
<dbReference type="GO" id="GO:0003862">
    <property type="term" value="F:3-isopropylmalate dehydrogenase activity"/>
    <property type="evidence" value="ECO:0000316"/>
    <property type="project" value="PomBase"/>
</dbReference>
<dbReference type="GO" id="GO:0000287">
    <property type="term" value="F:magnesium ion binding"/>
    <property type="evidence" value="ECO:0007669"/>
    <property type="project" value="InterPro"/>
</dbReference>
<dbReference type="GO" id="GO:0051287">
    <property type="term" value="F:NAD binding"/>
    <property type="evidence" value="ECO:0007669"/>
    <property type="project" value="InterPro"/>
</dbReference>
<dbReference type="GO" id="GO:0009098">
    <property type="term" value="P:L-leucine biosynthetic process"/>
    <property type="evidence" value="ECO:0000316"/>
    <property type="project" value="PomBase"/>
</dbReference>
<dbReference type="FunFam" id="3.40.718.10:FF:000006">
    <property type="entry name" value="3-isopropylmalate dehydrogenase"/>
    <property type="match status" value="1"/>
</dbReference>
<dbReference type="Gene3D" id="3.40.718.10">
    <property type="entry name" value="Isopropylmalate Dehydrogenase"/>
    <property type="match status" value="1"/>
</dbReference>
<dbReference type="InterPro" id="IPR019818">
    <property type="entry name" value="IsoCit/isopropylmalate_DH_CS"/>
</dbReference>
<dbReference type="InterPro" id="IPR024084">
    <property type="entry name" value="IsoPropMal-DH-like_dom"/>
</dbReference>
<dbReference type="InterPro" id="IPR004429">
    <property type="entry name" value="Isopropylmalate_DH"/>
</dbReference>
<dbReference type="NCBIfam" id="TIGR00169">
    <property type="entry name" value="leuB"/>
    <property type="match status" value="1"/>
</dbReference>
<dbReference type="PANTHER" id="PTHR42979">
    <property type="entry name" value="3-ISOPROPYLMALATE DEHYDROGENASE"/>
    <property type="match status" value="1"/>
</dbReference>
<dbReference type="PANTHER" id="PTHR42979:SF1">
    <property type="entry name" value="3-ISOPROPYLMALATE DEHYDROGENASE"/>
    <property type="match status" value="1"/>
</dbReference>
<dbReference type="Pfam" id="PF00180">
    <property type="entry name" value="Iso_dh"/>
    <property type="match status" value="1"/>
</dbReference>
<dbReference type="SMART" id="SM01329">
    <property type="entry name" value="Iso_dh"/>
    <property type="match status" value="1"/>
</dbReference>
<dbReference type="SUPFAM" id="SSF53659">
    <property type="entry name" value="Isocitrate/Isopropylmalate dehydrogenase-like"/>
    <property type="match status" value="1"/>
</dbReference>
<dbReference type="PROSITE" id="PS00470">
    <property type="entry name" value="IDH_IMDH"/>
    <property type="match status" value="1"/>
</dbReference>
<gene>
    <name type="primary">leu1</name>
    <name type="ORF">SPBC1A4.02c</name>
    <name type="ORF">SPBC1E8.07c</name>
</gene>
<feature type="chain" id="PRO_0000083618" description="3-isopropylmalate dehydrogenase">
    <location>
        <begin position="1"/>
        <end position="371"/>
    </location>
</feature>
<feature type="binding site" evidence="1">
    <location>
        <begin position="78"/>
        <end position="89"/>
    </location>
    <ligand>
        <name>NAD(+)</name>
        <dbReference type="ChEBI" id="CHEBI:57540"/>
    </ligand>
</feature>
<feature type="binding site" evidence="1">
    <location>
        <position position="96"/>
    </location>
    <ligand>
        <name>substrate</name>
    </ligand>
</feature>
<feature type="binding site" evidence="1">
    <location>
        <position position="106"/>
    </location>
    <ligand>
        <name>substrate</name>
    </ligand>
</feature>
<feature type="binding site" evidence="1">
    <location>
        <position position="135"/>
    </location>
    <ligand>
        <name>substrate</name>
    </ligand>
</feature>
<feature type="binding site" evidence="1">
    <location>
        <position position="224"/>
    </location>
    <ligand>
        <name>Mg(2+)</name>
        <dbReference type="ChEBI" id="CHEBI:18420"/>
    </ligand>
</feature>
<feature type="binding site" evidence="1">
    <location>
        <position position="224"/>
    </location>
    <ligand>
        <name>substrate</name>
    </ligand>
</feature>
<feature type="binding site" evidence="1">
    <location>
        <position position="249"/>
    </location>
    <ligand>
        <name>Mg(2+)</name>
        <dbReference type="ChEBI" id="CHEBI:18420"/>
    </ligand>
</feature>
<feature type="binding site" evidence="1">
    <location>
        <position position="253"/>
    </location>
    <ligand>
        <name>Mg(2+)</name>
        <dbReference type="ChEBI" id="CHEBI:18420"/>
    </ligand>
</feature>
<feature type="binding site" evidence="1">
    <location>
        <begin position="290"/>
        <end position="302"/>
    </location>
    <ligand>
        <name>NAD(+)</name>
        <dbReference type="ChEBI" id="CHEBI:57540"/>
    </ligand>
</feature>
<feature type="site" description="Important for catalysis" evidence="1">
    <location>
        <position position="142"/>
    </location>
</feature>
<feature type="site" description="Important for catalysis" evidence="1">
    <location>
        <position position="191"/>
    </location>
</feature>
<feature type="modified residue" description="Phosphothreonine" evidence="2">
    <location>
        <position position="55"/>
    </location>
</feature>
<sequence>MCAKKIVVLPGDHIGPEIVASALEVLKVVEKKRPELKLEFEEHKIGGASIDAYGTPLTDETVKACLEADGVLLGAVGGPEWTNPNCRPEQGLLKLRKSMGVWANLRPCNFASKSLVKYSPLKPEIVEGVDFCVVRELTGGCYFGERTEDNGSGYAMDTWPYSLEEVSRIARLAAWLAETSNPPAPVTLLDKANVLATSRLWRKTVAKIFKEEYPHLTLKNQLIDSAAMLLVKSPRTLNGVVLTDNLFGDIISDEASVIPGSLGLLPSASLSGVVGKSEEKVHCLVEPIHGSAPDIAGKGIVNPVGTILSASLLLRYGLNAPKEAEAIEAAVRKVLDDTSIGGRGLYTRDLGGEASTADITKAVVEELEKIL</sequence>
<protein>
    <recommendedName>
        <fullName>3-isopropylmalate dehydrogenase</fullName>
        <shortName>3-IPM-DH</shortName>
        <shortName>IMDH</shortName>
        <ecNumber evidence="4">1.1.1.85</ecNumber>
    </recommendedName>
    <alternativeName>
        <fullName>Beta-IPM dehydrogenase</fullName>
    </alternativeName>
</protein>
<comment type="function">
    <text evidence="4">Catalyzes the oxidation of 3-carboxy-2-hydroxy-4-methylpentanoate (3-isopropylmalate) to 3-carboxy-4-methyl-2-oxopentanoate. The product decarboxylates to 4-methyl-2 oxopentanoate.</text>
</comment>
<comment type="catalytic activity">
    <reaction evidence="4">
        <text>(2R,3S)-3-isopropylmalate + NAD(+) = 4-methyl-2-oxopentanoate + CO2 + NADH</text>
        <dbReference type="Rhea" id="RHEA:32271"/>
        <dbReference type="ChEBI" id="CHEBI:16526"/>
        <dbReference type="ChEBI" id="CHEBI:17865"/>
        <dbReference type="ChEBI" id="CHEBI:35121"/>
        <dbReference type="ChEBI" id="CHEBI:57540"/>
        <dbReference type="ChEBI" id="CHEBI:57945"/>
        <dbReference type="EC" id="1.1.1.85"/>
    </reaction>
    <physiologicalReaction direction="left-to-right" evidence="4">
        <dbReference type="Rhea" id="RHEA:32272"/>
    </physiologicalReaction>
</comment>
<comment type="cofactor">
    <cofactor evidence="1">
        <name>Mg(2+)</name>
        <dbReference type="ChEBI" id="CHEBI:18420"/>
    </cofactor>
    <cofactor evidence="1">
        <name>Mn(2+)</name>
        <dbReference type="ChEBI" id="CHEBI:29035"/>
    </cofactor>
    <text evidence="1">Binds 1 Mg(2+) or Mn(2+) ion per subunit.</text>
</comment>
<comment type="pathway">
    <text evidence="4">Amino-acid biosynthesis; L-leucine biosynthesis; L-leucine from 3-methyl-2-oxobutanoate: step 3/4.</text>
</comment>
<comment type="subunit">
    <text evidence="1">Homodimer.</text>
</comment>
<comment type="subcellular location">
    <subcellularLocation>
        <location>Cytoplasm</location>
    </subcellularLocation>
</comment>
<comment type="similarity">
    <text evidence="3">Belongs to the isocitrate and isopropylmalate dehydrogenases family.</text>
</comment>
<keyword id="KW-0028">Amino-acid biosynthesis</keyword>
<keyword id="KW-0100">Branched-chain amino acid biosynthesis</keyword>
<keyword id="KW-0963">Cytoplasm</keyword>
<keyword id="KW-0432">Leucine biosynthesis</keyword>
<keyword id="KW-0460">Magnesium</keyword>
<keyword id="KW-0464">Manganese</keyword>
<keyword id="KW-0479">Metal-binding</keyword>
<keyword id="KW-0520">NAD</keyword>
<keyword id="KW-0560">Oxidoreductase</keyword>
<keyword id="KW-0597">Phosphoprotein</keyword>
<keyword id="KW-1185">Reference proteome</keyword>